<protein>
    <recommendedName>
        <fullName evidence="5">DASH complex subunit ASK1</fullName>
    </recommendedName>
    <alternativeName>
        <fullName evidence="1">Outer kinetochore protein DAD1</fullName>
    </alternativeName>
</protein>
<accession>G0S8F9</accession>
<organism evidence="8">
    <name type="scientific">Chaetomium thermophilum (strain DSM 1495 / CBS 144.50 / IMI 039719)</name>
    <name type="common">Thermochaetoides thermophila</name>
    <dbReference type="NCBI Taxonomy" id="759272"/>
    <lineage>
        <taxon>Eukaryota</taxon>
        <taxon>Fungi</taxon>
        <taxon>Dikarya</taxon>
        <taxon>Ascomycota</taxon>
        <taxon>Pezizomycotina</taxon>
        <taxon>Sordariomycetes</taxon>
        <taxon>Sordariomycetidae</taxon>
        <taxon>Sordariales</taxon>
        <taxon>Chaetomiaceae</taxon>
        <taxon>Thermochaetoides</taxon>
    </lineage>
</organism>
<keyword id="KW-0002">3D-structure</keyword>
<keyword id="KW-0131">Cell cycle</keyword>
<keyword id="KW-0132">Cell division</keyword>
<keyword id="KW-0137">Centromere</keyword>
<keyword id="KW-0158">Chromosome</keyword>
<keyword id="KW-0159">Chromosome partition</keyword>
<keyword id="KW-0963">Cytoplasm</keyword>
<keyword id="KW-0206">Cytoskeleton</keyword>
<keyword id="KW-0995">Kinetochore</keyword>
<keyword id="KW-0493">Microtubule</keyword>
<keyword id="KW-0498">Mitosis</keyword>
<keyword id="KW-0539">Nucleus</keyword>
<keyword id="KW-1185">Reference proteome</keyword>
<reference evidence="8" key="1">
    <citation type="journal article" date="2011" name="Cell">
        <title>Insight into structure and assembly of the nuclear pore complex by utilizing the genome of a eukaryotic thermophile.</title>
        <authorList>
            <person name="Amlacher S."/>
            <person name="Sarges P."/>
            <person name="Flemming D."/>
            <person name="van Noort V."/>
            <person name="Kunze R."/>
            <person name="Devos D.P."/>
            <person name="Arumugam M."/>
            <person name="Bork P."/>
            <person name="Hurt E."/>
        </authorList>
    </citation>
    <scope>NUCLEOTIDE SEQUENCE [LARGE SCALE GENOMIC DNA]</scope>
    <source>
        <strain evidence="8">DSM 1495 / CBS 144.50 / IMI 039719</strain>
    </source>
</reference>
<reference evidence="9" key="2">
    <citation type="journal article" date="2018" name="Science">
        <title>Structure of the DASH/Dam1 complex shows its role at the yeast kinetochore-microtubule interface.</title>
        <authorList>
            <person name="Jenni S."/>
            <person name="Harrison S.C."/>
        </authorList>
    </citation>
    <scope>STRUCTURE BY ELECTRON MICROSCOPY (4.50 ANGSTROMS) OF 12-88</scope>
    <scope>IDENTIFICATION IN THE DASH COMPLEX</scope>
</reference>
<feature type="chain" id="PRO_0000459457" description="DASH complex subunit ASK1">
    <location>
        <begin position="1"/>
        <end position="508"/>
    </location>
</feature>
<feature type="region of interest" description="Disordered" evidence="3">
    <location>
        <begin position="86"/>
        <end position="138"/>
    </location>
</feature>
<feature type="region of interest" description="Disordered" evidence="3">
    <location>
        <begin position="150"/>
        <end position="355"/>
    </location>
</feature>
<feature type="compositionally biased region" description="Polar residues" evidence="3">
    <location>
        <begin position="116"/>
        <end position="138"/>
    </location>
</feature>
<feature type="compositionally biased region" description="Basic and acidic residues" evidence="3">
    <location>
        <begin position="161"/>
        <end position="175"/>
    </location>
</feature>
<feature type="compositionally biased region" description="Acidic residues" evidence="3">
    <location>
        <begin position="201"/>
        <end position="213"/>
    </location>
</feature>
<feature type="compositionally biased region" description="Basic and acidic residues" evidence="3">
    <location>
        <begin position="229"/>
        <end position="238"/>
    </location>
</feature>
<feature type="compositionally biased region" description="Acidic residues" evidence="3">
    <location>
        <begin position="239"/>
        <end position="258"/>
    </location>
</feature>
<feature type="compositionally biased region" description="Basic and acidic residues" evidence="3">
    <location>
        <begin position="326"/>
        <end position="338"/>
    </location>
</feature>
<sequence>MSRPGPSAPRQLTLTEELEKLEQQITLTLQEIDSNFAKAHRIVTTSILPLVEQYGEHSRAVWEATKFWKQFFEASANVSLSGYEELVDGGETSPAEETAHDQEEEQTTAIHDHTQEPSQYTPRPQTSAGGHDTTTLSSVDDQSSVLYDRSRAAQQQPAQLQHHDDSSVLTDRDGDLAGSTPHAPPRGIKIEQQQQPQPAGDEMDIDMDEEDSELIFQQHTTRLLGETSRYYDDDHGFEQGEEEEDEEEEEEEEEEEEGGGGGEVGDDSVLGARSRSKNPVLHRMQNKTYRIMATPHKGISAVKPNTTSNRGVSPVRWKIQPTTPKIKQEDTEKKRPLWEDSPSSSPEPAPPQLRSAAFMSPMRLAYGGPKTSEKLQAAAKAIAAPRTPGVSVQTPAVGRKTKDVFGGVGMQSATKAIVDAKAAAKEKRKSILEEITWESDEDLGVSPPKTIQFAVPASRLMQTPAREASRRIVDDLLLTAGGGDLIEGSSEYSPSVVKMNQDIMDESF</sequence>
<dbReference type="EMBL" id="GL988041">
    <property type="protein sequence ID" value="EGS21133.1"/>
    <property type="molecule type" value="Genomic_DNA"/>
</dbReference>
<dbReference type="RefSeq" id="XP_006693429.1">
    <property type="nucleotide sequence ID" value="XM_006693366.1"/>
</dbReference>
<dbReference type="PDB" id="6CFZ">
    <property type="method" value="EM"/>
    <property type="resolution" value="4.50 A"/>
    <property type="chains" value="A=12-88"/>
</dbReference>
<dbReference type="PDBsum" id="6CFZ"/>
<dbReference type="EMDB" id="EMD-7469"/>
<dbReference type="SMR" id="G0S8F9"/>
<dbReference type="IntAct" id="G0S8F9">
    <property type="interactions" value="8"/>
</dbReference>
<dbReference type="STRING" id="759272.G0S8F9"/>
<dbReference type="GeneID" id="18257012"/>
<dbReference type="KEGG" id="cthr:CTHT_0029740"/>
<dbReference type="eggNOG" id="ENOG502S2V2">
    <property type="taxonomic scope" value="Eukaryota"/>
</dbReference>
<dbReference type="HOGENOM" id="CLU_625697_0_0_1"/>
<dbReference type="OMA" id="TIQFHIP"/>
<dbReference type="OrthoDB" id="5573898at2759"/>
<dbReference type="Proteomes" id="UP000008066">
    <property type="component" value="Unassembled WGS sequence"/>
</dbReference>
<dbReference type="GO" id="GO:0005737">
    <property type="term" value="C:cytoplasm"/>
    <property type="evidence" value="ECO:0007669"/>
    <property type="project" value="UniProtKB-KW"/>
</dbReference>
<dbReference type="GO" id="GO:0042729">
    <property type="term" value="C:DASH complex"/>
    <property type="evidence" value="ECO:0000314"/>
    <property type="project" value="UniProtKB"/>
</dbReference>
<dbReference type="GO" id="GO:0000776">
    <property type="term" value="C:kinetochore"/>
    <property type="evidence" value="ECO:0000305"/>
    <property type="project" value="UniProtKB"/>
</dbReference>
<dbReference type="GO" id="GO:0005874">
    <property type="term" value="C:microtubule"/>
    <property type="evidence" value="ECO:0007669"/>
    <property type="project" value="UniProtKB-KW"/>
</dbReference>
<dbReference type="GO" id="GO:0072686">
    <property type="term" value="C:mitotic spindle"/>
    <property type="evidence" value="ECO:0000305"/>
    <property type="project" value="UniProtKB"/>
</dbReference>
<dbReference type="GO" id="GO:0044732">
    <property type="term" value="C:mitotic spindle pole body"/>
    <property type="evidence" value="ECO:0007669"/>
    <property type="project" value="TreeGrafter"/>
</dbReference>
<dbReference type="GO" id="GO:0051315">
    <property type="term" value="P:attachment of mitotic spindle microtubules to kinetochore"/>
    <property type="evidence" value="ECO:0000305"/>
    <property type="project" value="UniProtKB"/>
</dbReference>
<dbReference type="GO" id="GO:0051301">
    <property type="term" value="P:cell division"/>
    <property type="evidence" value="ECO:0007669"/>
    <property type="project" value="UniProtKB-KW"/>
</dbReference>
<dbReference type="GO" id="GO:1990758">
    <property type="term" value="P:mitotic sister chromatid biorientation"/>
    <property type="evidence" value="ECO:0000250"/>
    <property type="project" value="UniProtKB"/>
</dbReference>
<dbReference type="GO" id="GO:1990976">
    <property type="term" value="P:protein transport along microtubule to mitotic spindle pole body"/>
    <property type="evidence" value="ECO:0000250"/>
    <property type="project" value="UniProtKB"/>
</dbReference>
<dbReference type="InterPro" id="IPR013964">
    <property type="entry name" value="DASH_Ask1"/>
</dbReference>
<dbReference type="PANTHER" id="PTHR28200">
    <property type="entry name" value="DASH COMPLEX SUBUNIT ASK1"/>
    <property type="match status" value="1"/>
</dbReference>
<dbReference type="PANTHER" id="PTHR28200:SF1">
    <property type="entry name" value="DASH COMPLEX SUBUNIT ASK1"/>
    <property type="match status" value="1"/>
</dbReference>
<dbReference type="Pfam" id="PF08655">
    <property type="entry name" value="DASH_Ask1"/>
    <property type="match status" value="1"/>
</dbReference>
<name>ASK1_CHATD</name>
<proteinExistence type="evidence at protein level"/>
<comment type="function">
    <text evidence="1">Component of the DASH complex that connects microtubules with kinetochores and couples microtubule depolymerisation to chromosome movement; it is involved in retrieving kinetochores to the spindle poles before their re-orientation on the spindle in early mitosis and allows microtubule depolymerization to pull chromosomes apart and resist detachment during anaphase (By similarity). Kinetochores, consisting of a centromere-associated inner segment and a microtubule-contacting outer segment, play a crucial role in chromosome segregation by mediating the physical connection between centromeric DNA and microtubules (By similarity). Kinetochores also serve as an input point for the spindle assembly checkpoint, which delays anaphase until all chromosomes have bioriented on the mitotic spindle (By similarity).</text>
</comment>
<comment type="subunit">
    <text evidence="2 4">Component of the DASH complex consisting of ASK1, DAD1, DAD2, DAD3, DAD4, DAM1, DUO1, HSK3, SPC19 and SPC34, with a stoichiometry of one copy of each subunit per complex (PubMed:29724956). Multiple DASH complexes oligomerize to form a ring that encircles spindle microtubules and organizes the rod-like NDC80 complexes of the outer kinetochore (PubMed:29724956). On cytoplasmic microtubules, DASH complexes appear to form patches instead of rings (By similarity).</text>
</comment>
<comment type="subcellular location">
    <subcellularLocation>
        <location evidence="1">Chromosome</location>
        <location evidence="1">Centromere</location>
        <location evidence="1">Kinetochore</location>
    </subcellularLocation>
    <subcellularLocation>
        <location evidence="1">Cytoplasm</location>
        <location evidence="1">Cytoskeleton</location>
        <location evidence="1">Spindle</location>
    </subcellularLocation>
    <subcellularLocation>
        <location evidence="1">Nucleus</location>
    </subcellularLocation>
</comment>
<comment type="similarity">
    <text evidence="6">Belongs to the DASH complex ASK1 family.</text>
</comment>
<evidence type="ECO:0000250" key="1">
    <source>
        <dbReference type="UniProtKB" id="P35734"/>
    </source>
</evidence>
<evidence type="ECO:0000250" key="2">
    <source>
        <dbReference type="UniProtKB" id="Q9P6S5"/>
    </source>
</evidence>
<evidence type="ECO:0000256" key="3">
    <source>
        <dbReference type="SAM" id="MobiDB-lite"/>
    </source>
</evidence>
<evidence type="ECO:0000269" key="4">
    <source>
    </source>
</evidence>
<evidence type="ECO:0000303" key="5">
    <source>
    </source>
</evidence>
<evidence type="ECO:0000305" key="6"/>
<evidence type="ECO:0000312" key="7">
    <source>
        <dbReference type="EMBL" id="EGS21133.1"/>
    </source>
</evidence>
<evidence type="ECO:0000312" key="8">
    <source>
        <dbReference type="Proteomes" id="UP000008066"/>
    </source>
</evidence>
<evidence type="ECO:0007744" key="9">
    <source>
        <dbReference type="PDB" id="6CFZ"/>
    </source>
</evidence>
<gene>
    <name evidence="5" type="primary">ASK1</name>
    <name evidence="7" type="ORF">CTHT_0029740</name>
</gene>